<comment type="subunit">
    <text evidence="1">Part of the 50S ribosomal subunit.</text>
</comment>
<comment type="similarity">
    <text evidence="1">Belongs to the universal ribosomal protein uL30 family.</text>
</comment>
<dbReference type="EMBL" id="CP000036">
    <property type="protein sequence ID" value="ABB67784.1"/>
    <property type="molecule type" value="Genomic_DNA"/>
</dbReference>
<dbReference type="RefSeq" id="WP_001140433.1">
    <property type="nucleotide sequence ID" value="NC_007613.1"/>
</dbReference>
<dbReference type="SMR" id="Q31VX4"/>
<dbReference type="GeneID" id="93778685"/>
<dbReference type="KEGG" id="sbo:SBO_3296"/>
<dbReference type="HOGENOM" id="CLU_131047_1_4_6"/>
<dbReference type="Proteomes" id="UP000007067">
    <property type="component" value="Chromosome"/>
</dbReference>
<dbReference type="GO" id="GO:0022625">
    <property type="term" value="C:cytosolic large ribosomal subunit"/>
    <property type="evidence" value="ECO:0007669"/>
    <property type="project" value="TreeGrafter"/>
</dbReference>
<dbReference type="GO" id="GO:0003735">
    <property type="term" value="F:structural constituent of ribosome"/>
    <property type="evidence" value="ECO:0007669"/>
    <property type="project" value="InterPro"/>
</dbReference>
<dbReference type="GO" id="GO:0006412">
    <property type="term" value="P:translation"/>
    <property type="evidence" value="ECO:0007669"/>
    <property type="project" value="UniProtKB-UniRule"/>
</dbReference>
<dbReference type="CDD" id="cd01658">
    <property type="entry name" value="Ribosomal_L30"/>
    <property type="match status" value="1"/>
</dbReference>
<dbReference type="FunFam" id="3.30.1390.20:FF:000001">
    <property type="entry name" value="50S ribosomal protein L30"/>
    <property type="match status" value="1"/>
</dbReference>
<dbReference type="Gene3D" id="3.30.1390.20">
    <property type="entry name" value="Ribosomal protein L30, ferredoxin-like fold domain"/>
    <property type="match status" value="1"/>
</dbReference>
<dbReference type="HAMAP" id="MF_01371_B">
    <property type="entry name" value="Ribosomal_uL30_B"/>
    <property type="match status" value="1"/>
</dbReference>
<dbReference type="InterPro" id="IPR036919">
    <property type="entry name" value="Ribo_uL30_ferredoxin-like_sf"/>
</dbReference>
<dbReference type="InterPro" id="IPR005996">
    <property type="entry name" value="Ribosomal_uL30_bac-type"/>
</dbReference>
<dbReference type="InterPro" id="IPR018038">
    <property type="entry name" value="Ribosomal_uL30_CS"/>
</dbReference>
<dbReference type="InterPro" id="IPR016082">
    <property type="entry name" value="Ribosomal_uL30_ferredoxin-like"/>
</dbReference>
<dbReference type="NCBIfam" id="TIGR01308">
    <property type="entry name" value="rpmD_bact"/>
    <property type="match status" value="1"/>
</dbReference>
<dbReference type="PANTHER" id="PTHR15892:SF2">
    <property type="entry name" value="LARGE RIBOSOMAL SUBUNIT PROTEIN UL30M"/>
    <property type="match status" value="1"/>
</dbReference>
<dbReference type="PANTHER" id="PTHR15892">
    <property type="entry name" value="MITOCHONDRIAL RIBOSOMAL PROTEIN L30"/>
    <property type="match status" value="1"/>
</dbReference>
<dbReference type="Pfam" id="PF00327">
    <property type="entry name" value="Ribosomal_L30"/>
    <property type="match status" value="1"/>
</dbReference>
<dbReference type="PIRSF" id="PIRSF002211">
    <property type="entry name" value="Ribosomal_L30_bac-type"/>
    <property type="match status" value="1"/>
</dbReference>
<dbReference type="SUPFAM" id="SSF55129">
    <property type="entry name" value="Ribosomal protein L30p/L7e"/>
    <property type="match status" value="1"/>
</dbReference>
<dbReference type="PROSITE" id="PS00634">
    <property type="entry name" value="RIBOSOMAL_L30"/>
    <property type="match status" value="1"/>
</dbReference>
<reference key="1">
    <citation type="journal article" date="2005" name="Nucleic Acids Res.">
        <title>Genome dynamics and diversity of Shigella species, the etiologic agents of bacillary dysentery.</title>
        <authorList>
            <person name="Yang F."/>
            <person name="Yang J."/>
            <person name="Zhang X."/>
            <person name="Chen L."/>
            <person name="Jiang Y."/>
            <person name="Yan Y."/>
            <person name="Tang X."/>
            <person name="Wang J."/>
            <person name="Xiong Z."/>
            <person name="Dong J."/>
            <person name="Xue Y."/>
            <person name="Zhu Y."/>
            <person name="Xu X."/>
            <person name="Sun L."/>
            <person name="Chen S."/>
            <person name="Nie H."/>
            <person name="Peng J."/>
            <person name="Xu J."/>
            <person name="Wang Y."/>
            <person name="Yuan Z."/>
            <person name="Wen Y."/>
            <person name="Yao Z."/>
            <person name="Shen Y."/>
            <person name="Qiang B."/>
            <person name="Hou Y."/>
            <person name="Yu J."/>
            <person name="Jin Q."/>
        </authorList>
    </citation>
    <scope>NUCLEOTIDE SEQUENCE [LARGE SCALE GENOMIC DNA]</scope>
    <source>
        <strain>Sb227</strain>
    </source>
</reference>
<gene>
    <name evidence="1" type="primary">rpmD</name>
    <name type="ordered locus">SBO_3296</name>
</gene>
<feature type="chain" id="PRO_0000273854" description="Large ribosomal subunit protein uL30">
    <location>
        <begin position="1"/>
        <end position="59"/>
    </location>
</feature>
<organism>
    <name type="scientific">Shigella boydii serotype 4 (strain Sb227)</name>
    <dbReference type="NCBI Taxonomy" id="300268"/>
    <lineage>
        <taxon>Bacteria</taxon>
        <taxon>Pseudomonadati</taxon>
        <taxon>Pseudomonadota</taxon>
        <taxon>Gammaproteobacteria</taxon>
        <taxon>Enterobacterales</taxon>
        <taxon>Enterobacteriaceae</taxon>
        <taxon>Shigella</taxon>
    </lineage>
</organism>
<proteinExistence type="inferred from homology"/>
<sequence>MAKTIKITQTRSAIGRLPKHKATLLGLGLRRIGHTVEREDTPAIRGMINAVSFMVKVEE</sequence>
<keyword id="KW-0687">Ribonucleoprotein</keyword>
<keyword id="KW-0689">Ribosomal protein</keyword>
<evidence type="ECO:0000255" key="1">
    <source>
        <dbReference type="HAMAP-Rule" id="MF_01371"/>
    </source>
</evidence>
<evidence type="ECO:0000305" key="2"/>
<accession>Q31VX4</accession>
<name>RL30_SHIBS</name>
<protein>
    <recommendedName>
        <fullName evidence="1">Large ribosomal subunit protein uL30</fullName>
    </recommendedName>
    <alternativeName>
        <fullName evidence="2">50S ribosomal protein L30</fullName>
    </alternativeName>
</protein>